<feature type="signal peptide" evidence="2">
    <location>
        <begin position="1"/>
        <end position="18"/>
    </location>
</feature>
<feature type="chain" id="PRO_0000394107" description="Probable beta-glucosidase D">
    <location>
        <begin position="19"/>
        <end position="752"/>
    </location>
</feature>
<feature type="active site" evidence="1">
    <location>
        <position position="265"/>
    </location>
</feature>
<feature type="glycosylation site" description="N-linked (GlcNAc...) asparagine" evidence="2">
    <location>
        <position position="187"/>
    </location>
</feature>
<feature type="glycosylation site" description="N-linked (GlcNAc...) asparagine" evidence="2">
    <location>
        <position position="237"/>
    </location>
</feature>
<feature type="glycosylation site" description="N-linked (GlcNAc...) asparagine" evidence="2">
    <location>
        <position position="299"/>
    </location>
</feature>
<feature type="glycosylation site" description="N-linked (GlcNAc...) asparagine" evidence="2">
    <location>
        <position position="343"/>
    </location>
</feature>
<feature type="glycosylation site" description="N-linked (GlcNAc...) asparagine" evidence="2">
    <location>
        <position position="441"/>
    </location>
</feature>
<feature type="glycosylation site" description="N-linked (GlcNAc...) asparagine" evidence="2">
    <location>
        <position position="510"/>
    </location>
</feature>
<feature type="glycosylation site" description="N-linked (GlcNAc...) asparagine" evidence="2">
    <location>
        <position position="532"/>
    </location>
</feature>
<feature type="glycosylation site" description="N-linked (GlcNAc...) asparagine" evidence="2">
    <location>
        <position position="571"/>
    </location>
</feature>
<feature type="glycosylation site" description="N-linked (GlcNAc...) asparagine" evidence="2">
    <location>
        <position position="586"/>
    </location>
</feature>
<feature type="glycosylation site" description="N-linked (GlcNAc...) asparagine" evidence="2">
    <location>
        <position position="638"/>
    </location>
</feature>
<feature type="glycosylation site" description="N-linked (GlcNAc...) asparagine" evidence="2">
    <location>
        <position position="661"/>
    </location>
</feature>
<feature type="glycosylation site" description="N-linked (GlcNAc...) asparagine" evidence="2">
    <location>
        <position position="743"/>
    </location>
</feature>
<evidence type="ECO:0000250" key="1"/>
<evidence type="ECO:0000255" key="2"/>
<evidence type="ECO:0000305" key="3"/>
<organism>
    <name type="scientific">Aspergillus oryzae (strain ATCC 42149 / RIB 40)</name>
    <name type="common">Yellow koji mold</name>
    <dbReference type="NCBI Taxonomy" id="510516"/>
    <lineage>
        <taxon>Eukaryota</taxon>
        <taxon>Fungi</taxon>
        <taxon>Dikarya</taxon>
        <taxon>Ascomycota</taxon>
        <taxon>Pezizomycotina</taxon>
        <taxon>Eurotiomycetes</taxon>
        <taxon>Eurotiomycetidae</taxon>
        <taxon>Eurotiales</taxon>
        <taxon>Aspergillaceae</taxon>
        <taxon>Aspergillus</taxon>
        <taxon>Aspergillus subgen. Circumdati</taxon>
    </lineage>
</organism>
<gene>
    <name type="primary">bglD</name>
    <name type="ORF">AO090001000266</name>
</gene>
<reference key="1">
    <citation type="journal article" date="2005" name="Nature">
        <title>Genome sequencing and analysis of Aspergillus oryzae.</title>
        <authorList>
            <person name="Machida M."/>
            <person name="Asai K."/>
            <person name="Sano M."/>
            <person name="Tanaka T."/>
            <person name="Kumagai T."/>
            <person name="Terai G."/>
            <person name="Kusumoto K."/>
            <person name="Arima T."/>
            <person name="Akita O."/>
            <person name="Kashiwagi Y."/>
            <person name="Abe K."/>
            <person name="Gomi K."/>
            <person name="Horiuchi H."/>
            <person name="Kitamoto K."/>
            <person name="Kobayashi T."/>
            <person name="Takeuchi M."/>
            <person name="Denning D.W."/>
            <person name="Galagan J.E."/>
            <person name="Nierman W.C."/>
            <person name="Yu J."/>
            <person name="Archer D.B."/>
            <person name="Bennett J.W."/>
            <person name="Bhatnagar D."/>
            <person name="Cleveland T.E."/>
            <person name="Fedorova N.D."/>
            <person name="Gotoh O."/>
            <person name="Horikawa H."/>
            <person name="Hosoyama A."/>
            <person name="Ichinomiya M."/>
            <person name="Igarashi R."/>
            <person name="Iwashita K."/>
            <person name="Juvvadi P.R."/>
            <person name="Kato M."/>
            <person name="Kato Y."/>
            <person name="Kin T."/>
            <person name="Kokubun A."/>
            <person name="Maeda H."/>
            <person name="Maeyama N."/>
            <person name="Maruyama J."/>
            <person name="Nagasaki H."/>
            <person name="Nakajima T."/>
            <person name="Oda K."/>
            <person name="Okada K."/>
            <person name="Paulsen I."/>
            <person name="Sakamoto K."/>
            <person name="Sawano T."/>
            <person name="Takahashi M."/>
            <person name="Takase K."/>
            <person name="Terabayashi Y."/>
            <person name="Wortman J.R."/>
            <person name="Yamada O."/>
            <person name="Yamagata Y."/>
            <person name="Anazawa H."/>
            <person name="Hata Y."/>
            <person name="Koide Y."/>
            <person name="Komori T."/>
            <person name="Koyama Y."/>
            <person name="Minetoki T."/>
            <person name="Suharnan S."/>
            <person name="Tanaka A."/>
            <person name="Isono K."/>
            <person name="Kuhara S."/>
            <person name="Ogasawara N."/>
            <person name="Kikuchi H."/>
        </authorList>
    </citation>
    <scope>NUCLEOTIDE SEQUENCE [LARGE SCALE GENOMIC DNA]</scope>
    <source>
        <strain>ATCC 42149 / RIB 40</strain>
    </source>
</reference>
<protein>
    <recommendedName>
        <fullName>Probable beta-glucosidase D</fullName>
        <ecNumber>3.2.1.21</ecNumber>
    </recommendedName>
    <alternativeName>
        <fullName>Beta-D-glucoside glucohydrolase D</fullName>
    </alternativeName>
    <alternativeName>
        <fullName>Cellobiase D</fullName>
    </alternativeName>
    <alternativeName>
        <fullName>Gentiobiase D</fullName>
    </alternativeName>
</protein>
<sequence length="752" mass="80223">MRFVSLAVGAALLGAAGASSISSNVGLLKANGVALGNWEAAYEKASAFVSGLTTDQKLALITGSNVESANGNFTPLYFLDGDMGLQDFYYVSAFSLSSALAMTWDRDAIYEQAKAVGSEFYNKGVQVVAGPTSQPLGRTPWGGRGVEGFGPDPYLNGLATGLTTKGYVDAGVIPGGKHFLLYEQETNRTSSFGSSGEGSPYSSNADDKTIHETYLWPFYDAVKNGAGAVMCAMTKVNGTMACENSDLLMKMLKTELGFPGMVWPDMNGQNSAKGSALGGEDYGSSSIWSTSTMESFLSNGTLSEARLNDMAIRNLIGYYYVNLDNGRQPTRQTTDVYVDVRANHSKLIRENGAKSMALLKNEGVLPLSKPHVMSIFGAHAGPIMGGPNSNVDVMGSGPTYQGHLATGSGSGMASMPYLITPYDALTNKAAQDGTVLRWVLNDTYSSGGGSSLVPSSTSSTAVEPSFENFATGSDICLVFINALAGEGADRTELYNADQDAMVNTVADNCNNTVAVVNTVGPRLLDQWIEHDNVTAVLYGSLLGQESGNSIVDLLYGDVNPSGRLVHTIAKNESDYNVGLCYTAQCNFTEGVYLDYRYFDAHNITPRYPFGHGLSYTTFHYSSLAIKAPSSITKAPKGNLTVGGPSDLWDVVGTVSARIANNGTLSGAEVPQLYLGFPDSADQPVRQLRGFDRVELSAGQEAVVTFNLRRRDISYWNLKTQQWMVAGGKYTVFVGGSSRDLRLNGTFFLWVGS</sequence>
<name>BGLD_ASPOR</name>
<proteinExistence type="inferred from homology"/>
<dbReference type="EC" id="3.2.1.21"/>
<dbReference type="EMBL" id="BA000050">
    <property type="protein sequence ID" value="BAE56805.1"/>
    <property type="molecule type" value="Genomic_DNA"/>
</dbReference>
<dbReference type="SMR" id="Q2UNR0"/>
<dbReference type="STRING" id="510516.Q2UNR0"/>
<dbReference type="CAZy" id="GH3">
    <property type="family name" value="Glycoside Hydrolase Family 3"/>
</dbReference>
<dbReference type="GlyCosmos" id="Q2UNR0">
    <property type="glycosylation" value="12 sites, No reported glycans"/>
</dbReference>
<dbReference type="EnsemblFungi" id="BAE56805">
    <property type="protein sequence ID" value="BAE56805"/>
    <property type="gene ID" value="AO090001000266"/>
</dbReference>
<dbReference type="VEuPathDB" id="FungiDB:AO090001000266"/>
<dbReference type="HOGENOM" id="CLU_004542_2_1_1"/>
<dbReference type="OMA" id="WVLNDTY"/>
<dbReference type="UniPathway" id="UPA00696"/>
<dbReference type="Proteomes" id="UP000006564">
    <property type="component" value="Chromosome 2"/>
</dbReference>
<dbReference type="GO" id="GO:0005576">
    <property type="term" value="C:extracellular region"/>
    <property type="evidence" value="ECO:0007669"/>
    <property type="project" value="UniProtKB-SubCell"/>
</dbReference>
<dbReference type="GO" id="GO:0008422">
    <property type="term" value="F:beta-glucosidase activity"/>
    <property type="evidence" value="ECO:0007669"/>
    <property type="project" value="UniProtKB-EC"/>
</dbReference>
<dbReference type="GO" id="GO:0030245">
    <property type="term" value="P:cellulose catabolic process"/>
    <property type="evidence" value="ECO:0007669"/>
    <property type="project" value="UniProtKB-UniPathway"/>
</dbReference>
<dbReference type="FunFam" id="2.60.40.10:FF:000757">
    <property type="entry name" value="Beta-glucosidase G"/>
    <property type="match status" value="1"/>
</dbReference>
<dbReference type="FunFam" id="3.20.20.300:FF:000002">
    <property type="entry name" value="Probable beta-glucosidase"/>
    <property type="match status" value="1"/>
</dbReference>
<dbReference type="FunFam" id="3.40.50.1700:FF:000021">
    <property type="entry name" value="Probable beta-glucosidase D"/>
    <property type="match status" value="1"/>
</dbReference>
<dbReference type="Gene3D" id="3.40.50.1700">
    <property type="entry name" value="Glycoside hydrolase family 3 C-terminal domain"/>
    <property type="match status" value="1"/>
</dbReference>
<dbReference type="Gene3D" id="3.20.20.300">
    <property type="entry name" value="Glycoside hydrolase, family 3, N-terminal domain"/>
    <property type="match status" value="1"/>
</dbReference>
<dbReference type="Gene3D" id="2.60.40.10">
    <property type="entry name" value="Immunoglobulins"/>
    <property type="match status" value="1"/>
</dbReference>
<dbReference type="InterPro" id="IPR050288">
    <property type="entry name" value="Cellulose_deg_GH3"/>
</dbReference>
<dbReference type="InterPro" id="IPR026891">
    <property type="entry name" value="Fn3-like"/>
</dbReference>
<dbReference type="InterPro" id="IPR002772">
    <property type="entry name" value="Glyco_hydro_3_C"/>
</dbReference>
<dbReference type="InterPro" id="IPR036881">
    <property type="entry name" value="Glyco_hydro_3_C_sf"/>
</dbReference>
<dbReference type="InterPro" id="IPR001764">
    <property type="entry name" value="Glyco_hydro_3_N"/>
</dbReference>
<dbReference type="InterPro" id="IPR036962">
    <property type="entry name" value="Glyco_hydro_3_N_sf"/>
</dbReference>
<dbReference type="InterPro" id="IPR017853">
    <property type="entry name" value="Glycoside_hydrolase_SF"/>
</dbReference>
<dbReference type="InterPro" id="IPR013783">
    <property type="entry name" value="Ig-like_fold"/>
</dbReference>
<dbReference type="PANTHER" id="PTHR42715">
    <property type="entry name" value="BETA-GLUCOSIDASE"/>
    <property type="match status" value="1"/>
</dbReference>
<dbReference type="PANTHER" id="PTHR42715:SF14">
    <property type="entry name" value="BETA-GLUCOSIDASE D-RELATED"/>
    <property type="match status" value="1"/>
</dbReference>
<dbReference type="Pfam" id="PF14310">
    <property type="entry name" value="Fn3-like"/>
    <property type="match status" value="1"/>
</dbReference>
<dbReference type="Pfam" id="PF00933">
    <property type="entry name" value="Glyco_hydro_3"/>
    <property type="match status" value="1"/>
</dbReference>
<dbReference type="Pfam" id="PF01915">
    <property type="entry name" value="Glyco_hydro_3_C"/>
    <property type="match status" value="1"/>
</dbReference>
<dbReference type="PRINTS" id="PR00133">
    <property type="entry name" value="GLHYDRLASE3"/>
</dbReference>
<dbReference type="SMART" id="SM01217">
    <property type="entry name" value="Fn3_like"/>
    <property type="match status" value="1"/>
</dbReference>
<dbReference type="SUPFAM" id="SSF51445">
    <property type="entry name" value="(Trans)glycosidases"/>
    <property type="match status" value="1"/>
</dbReference>
<dbReference type="SUPFAM" id="SSF52279">
    <property type="entry name" value="Beta-D-glucan exohydrolase, C-terminal domain"/>
    <property type="match status" value="1"/>
</dbReference>
<keyword id="KW-0119">Carbohydrate metabolism</keyword>
<keyword id="KW-0136">Cellulose degradation</keyword>
<keyword id="KW-0325">Glycoprotein</keyword>
<keyword id="KW-0326">Glycosidase</keyword>
<keyword id="KW-0378">Hydrolase</keyword>
<keyword id="KW-0624">Polysaccharide degradation</keyword>
<keyword id="KW-1185">Reference proteome</keyword>
<keyword id="KW-0964">Secreted</keyword>
<keyword id="KW-0732">Signal</keyword>
<accession>Q2UNR0</accession>
<comment type="function">
    <text evidence="1">Beta-glucosidases are one of a number of cellulolytic enzymes involved in the degradation of cellulosic biomass. Catalyzes the last step releasing glucose from the inhibitory cellobiose (By similarity).</text>
</comment>
<comment type="catalytic activity">
    <reaction>
        <text>Hydrolysis of terminal, non-reducing beta-D-glucosyl residues with release of beta-D-glucose.</text>
        <dbReference type="EC" id="3.2.1.21"/>
    </reaction>
</comment>
<comment type="pathway">
    <text>Glycan metabolism; cellulose degradation.</text>
</comment>
<comment type="subcellular location">
    <subcellularLocation>
        <location evidence="1">Secreted</location>
    </subcellularLocation>
</comment>
<comment type="similarity">
    <text evidence="3">Belongs to the glycosyl hydrolase 3 family.</text>
</comment>